<comment type="function">
    <text evidence="1">Condenses 4-methyl-5-(beta-hydroxyethyl)thiazole monophosphate (THZ-P) and 2-methyl-4-amino-5-hydroxymethyl pyrimidine pyrophosphate (HMP-PP) to form thiamine monophosphate (TMP).</text>
</comment>
<comment type="catalytic activity">
    <reaction evidence="1">
        <text>2-[(2R,5Z)-2-carboxy-4-methylthiazol-5(2H)-ylidene]ethyl phosphate + 4-amino-2-methyl-5-(diphosphooxymethyl)pyrimidine + 2 H(+) = thiamine phosphate + CO2 + diphosphate</text>
        <dbReference type="Rhea" id="RHEA:47844"/>
        <dbReference type="ChEBI" id="CHEBI:15378"/>
        <dbReference type="ChEBI" id="CHEBI:16526"/>
        <dbReference type="ChEBI" id="CHEBI:33019"/>
        <dbReference type="ChEBI" id="CHEBI:37575"/>
        <dbReference type="ChEBI" id="CHEBI:57841"/>
        <dbReference type="ChEBI" id="CHEBI:62899"/>
        <dbReference type="EC" id="2.5.1.3"/>
    </reaction>
</comment>
<comment type="catalytic activity">
    <reaction evidence="1">
        <text>2-(2-carboxy-4-methylthiazol-5-yl)ethyl phosphate + 4-amino-2-methyl-5-(diphosphooxymethyl)pyrimidine + 2 H(+) = thiamine phosphate + CO2 + diphosphate</text>
        <dbReference type="Rhea" id="RHEA:47848"/>
        <dbReference type="ChEBI" id="CHEBI:15378"/>
        <dbReference type="ChEBI" id="CHEBI:16526"/>
        <dbReference type="ChEBI" id="CHEBI:33019"/>
        <dbReference type="ChEBI" id="CHEBI:37575"/>
        <dbReference type="ChEBI" id="CHEBI:57841"/>
        <dbReference type="ChEBI" id="CHEBI:62890"/>
        <dbReference type="EC" id="2.5.1.3"/>
    </reaction>
</comment>
<comment type="catalytic activity">
    <reaction evidence="1">
        <text>4-methyl-5-(2-phosphooxyethyl)-thiazole + 4-amino-2-methyl-5-(diphosphooxymethyl)pyrimidine + H(+) = thiamine phosphate + diphosphate</text>
        <dbReference type="Rhea" id="RHEA:22328"/>
        <dbReference type="ChEBI" id="CHEBI:15378"/>
        <dbReference type="ChEBI" id="CHEBI:33019"/>
        <dbReference type="ChEBI" id="CHEBI:37575"/>
        <dbReference type="ChEBI" id="CHEBI:57841"/>
        <dbReference type="ChEBI" id="CHEBI:58296"/>
        <dbReference type="EC" id="2.5.1.3"/>
    </reaction>
</comment>
<comment type="cofactor">
    <cofactor evidence="1">
        <name>Mg(2+)</name>
        <dbReference type="ChEBI" id="CHEBI:18420"/>
    </cofactor>
    <text evidence="1">Binds 1 Mg(2+) ion per subunit.</text>
</comment>
<comment type="pathway">
    <text evidence="1">Cofactor biosynthesis; thiamine diphosphate biosynthesis; thiamine phosphate from 4-amino-2-methyl-5-diphosphomethylpyrimidine and 4-methyl-5-(2-phosphoethyl)-thiazole: step 1/1.</text>
</comment>
<comment type="similarity">
    <text evidence="1">Belongs to the thiamine-phosphate synthase family.</text>
</comment>
<name>THIE_METCA</name>
<sequence>MKNSMYLPFPSKGLYAITPDRLQGDALLAAAESAILGGAAVVQYRPKSGPASDRLSDGIRLQELCRTAGIPLIVNDSPRLAAEIGADGVHLGKNDGSVAAARHVLGDRAIVGISCYDSLERALRAEAEGANYVAFGALFPSATKPCASRARLETLREAGTRLQIPIAAIGGIDTTNAGQVIGAGADLVAAVEAVFGAADVARAARELCSLFHAPRKRRPRCDDA</sequence>
<organism>
    <name type="scientific">Methylococcus capsulatus (strain ATCC 33009 / NCIMB 11132 / Bath)</name>
    <dbReference type="NCBI Taxonomy" id="243233"/>
    <lineage>
        <taxon>Bacteria</taxon>
        <taxon>Pseudomonadati</taxon>
        <taxon>Pseudomonadota</taxon>
        <taxon>Gammaproteobacteria</taxon>
        <taxon>Methylococcales</taxon>
        <taxon>Methylococcaceae</taxon>
        <taxon>Methylococcus</taxon>
    </lineage>
</organism>
<feature type="chain" id="PRO_0000336406" description="Thiamine-phosphate synthase">
    <location>
        <begin position="1"/>
        <end position="224"/>
    </location>
</feature>
<feature type="binding site" evidence="1">
    <location>
        <begin position="43"/>
        <end position="47"/>
    </location>
    <ligand>
        <name>4-amino-2-methyl-5-(diphosphooxymethyl)pyrimidine</name>
        <dbReference type="ChEBI" id="CHEBI:57841"/>
    </ligand>
</feature>
<feature type="binding site" evidence="1">
    <location>
        <position position="75"/>
    </location>
    <ligand>
        <name>4-amino-2-methyl-5-(diphosphooxymethyl)pyrimidine</name>
        <dbReference type="ChEBI" id="CHEBI:57841"/>
    </ligand>
</feature>
<feature type="binding site" evidence="1">
    <location>
        <position position="76"/>
    </location>
    <ligand>
        <name>Mg(2+)</name>
        <dbReference type="ChEBI" id="CHEBI:18420"/>
    </ligand>
</feature>
<feature type="binding site" evidence="1">
    <location>
        <position position="95"/>
    </location>
    <ligand>
        <name>Mg(2+)</name>
        <dbReference type="ChEBI" id="CHEBI:18420"/>
    </ligand>
</feature>
<feature type="binding site" evidence="1">
    <location>
        <position position="114"/>
    </location>
    <ligand>
        <name>4-amino-2-methyl-5-(diphosphooxymethyl)pyrimidine</name>
        <dbReference type="ChEBI" id="CHEBI:57841"/>
    </ligand>
</feature>
<feature type="binding site" evidence="1">
    <location>
        <begin position="141"/>
        <end position="143"/>
    </location>
    <ligand>
        <name>2-[(2R,5Z)-2-carboxy-4-methylthiazol-5(2H)-ylidene]ethyl phosphate</name>
        <dbReference type="ChEBI" id="CHEBI:62899"/>
    </ligand>
</feature>
<feature type="binding site" evidence="1">
    <location>
        <position position="144"/>
    </location>
    <ligand>
        <name>4-amino-2-methyl-5-(diphosphooxymethyl)pyrimidine</name>
        <dbReference type="ChEBI" id="CHEBI:57841"/>
    </ligand>
</feature>
<feature type="binding site" evidence="1">
    <location>
        <position position="171"/>
    </location>
    <ligand>
        <name>2-[(2R,5Z)-2-carboxy-4-methylthiazol-5(2H)-ylidene]ethyl phosphate</name>
        <dbReference type="ChEBI" id="CHEBI:62899"/>
    </ligand>
</feature>
<dbReference type="EC" id="2.5.1.3" evidence="1"/>
<dbReference type="EMBL" id="AE017282">
    <property type="protein sequence ID" value="AAU90980.1"/>
    <property type="molecule type" value="Genomic_DNA"/>
</dbReference>
<dbReference type="RefSeq" id="WP_010962188.1">
    <property type="nucleotide sequence ID" value="NC_002977.6"/>
</dbReference>
<dbReference type="SMR" id="Q602R3"/>
<dbReference type="STRING" id="243233.MCA2999"/>
<dbReference type="GeneID" id="88225163"/>
<dbReference type="KEGG" id="mca:MCA2999"/>
<dbReference type="eggNOG" id="COG0352">
    <property type="taxonomic scope" value="Bacteria"/>
</dbReference>
<dbReference type="HOGENOM" id="CLU_018272_3_1_6"/>
<dbReference type="UniPathway" id="UPA00060">
    <property type="reaction ID" value="UER00141"/>
</dbReference>
<dbReference type="Proteomes" id="UP000006821">
    <property type="component" value="Chromosome"/>
</dbReference>
<dbReference type="GO" id="GO:0005737">
    <property type="term" value="C:cytoplasm"/>
    <property type="evidence" value="ECO:0007669"/>
    <property type="project" value="TreeGrafter"/>
</dbReference>
<dbReference type="GO" id="GO:0000287">
    <property type="term" value="F:magnesium ion binding"/>
    <property type="evidence" value="ECO:0007669"/>
    <property type="project" value="UniProtKB-UniRule"/>
</dbReference>
<dbReference type="GO" id="GO:0004789">
    <property type="term" value="F:thiamine-phosphate diphosphorylase activity"/>
    <property type="evidence" value="ECO:0007669"/>
    <property type="project" value="UniProtKB-UniRule"/>
</dbReference>
<dbReference type="GO" id="GO:0009228">
    <property type="term" value="P:thiamine biosynthetic process"/>
    <property type="evidence" value="ECO:0007669"/>
    <property type="project" value="UniProtKB-KW"/>
</dbReference>
<dbReference type="GO" id="GO:0009229">
    <property type="term" value="P:thiamine diphosphate biosynthetic process"/>
    <property type="evidence" value="ECO:0007669"/>
    <property type="project" value="UniProtKB-UniRule"/>
</dbReference>
<dbReference type="CDD" id="cd00564">
    <property type="entry name" value="TMP_TenI"/>
    <property type="match status" value="1"/>
</dbReference>
<dbReference type="Gene3D" id="3.20.20.70">
    <property type="entry name" value="Aldolase class I"/>
    <property type="match status" value="1"/>
</dbReference>
<dbReference type="HAMAP" id="MF_00097">
    <property type="entry name" value="TMP_synthase"/>
    <property type="match status" value="1"/>
</dbReference>
<dbReference type="InterPro" id="IPR013785">
    <property type="entry name" value="Aldolase_TIM"/>
</dbReference>
<dbReference type="InterPro" id="IPR036206">
    <property type="entry name" value="ThiamineP_synth_sf"/>
</dbReference>
<dbReference type="InterPro" id="IPR022998">
    <property type="entry name" value="ThiamineP_synth_TenI"/>
</dbReference>
<dbReference type="InterPro" id="IPR034291">
    <property type="entry name" value="TMP_synthase"/>
</dbReference>
<dbReference type="NCBIfam" id="TIGR00693">
    <property type="entry name" value="thiE"/>
    <property type="match status" value="1"/>
</dbReference>
<dbReference type="PANTHER" id="PTHR20857">
    <property type="entry name" value="THIAMINE-PHOSPHATE PYROPHOSPHORYLASE"/>
    <property type="match status" value="1"/>
</dbReference>
<dbReference type="PANTHER" id="PTHR20857:SF15">
    <property type="entry name" value="THIAMINE-PHOSPHATE SYNTHASE"/>
    <property type="match status" value="1"/>
</dbReference>
<dbReference type="Pfam" id="PF02581">
    <property type="entry name" value="TMP-TENI"/>
    <property type="match status" value="1"/>
</dbReference>
<dbReference type="SUPFAM" id="SSF51391">
    <property type="entry name" value="Thiamin phosphate synthase"/>
    <property type="match status" value="1"/>
</dbReference>
<evidence type="ECO:0000255" key="1">
    <source>
        <dbReference type="HAMAP-Rule" id="MF_00097"/>
    </source>
</evidence>
<protein>
    <recommendedName>
        <fullName evidence="1">Thiamine-phosphate synthase</fullName>
        <shortName evidence="1">TP synthase</shortName>
        <shortName evidence="1">TPS</shortName>
        <ecNumber evidence="1">2.5.1.3</ecNumber>
    </recommendedName>
    <alternativeName>
        <fullName evidence="1">Thiamine-phosphate pyrophosphorylase</fullName>
        <shortName evidence="1">TMP pyrophosphorylase</shortName>
        <shortName evidence="1">TMP-PPase</shortName>
    </alternativeName>
</protein>
<accession>Q602R3</accession>
<reference key="1">
    <citation type="journal article" date="2004" name="PLoS Biol.">
        <title>Genomic insights into methanotrophy: the complete genome sequence of Methylococcus capsulatus (Bath).</title>
        <authorList>
            <person name="Ward N.L."/>
            <person name="Larsen O."/>
            <person name="Sakwa J."/>
            <person name="Bruseth L."/>
            <person name="Khouri H.M."/>
            <person name="Durkin A.S."/>
            <person name="Dimitrov G."/>
            <person name="Jiang L."/>
            <person name="Scanlan D."/>
            <person name="Kang K.H."/>
            <person name="Lewis M.R."/>
            <person name="Nelson K.E."/>
            <person name="Methe B.A."/>
            <person name="Wu M."/>
            <person name="Heidelberg J.F."/>
            <person name="Paulsen I.T."/>
            <person name="Fouts D.E."/>
            <person name="Ravel J."/>
            <person name="Tettelin H."/>
            <person name="Ren Q."/>
            <person name="Read T.D."/>
            <person name="DeBoy R.T."/>
            <person name="Seshadri R."/>
            <person name="Salzberg S.L."/>
            <person name="Jensen H.B."/>
            <person name="Birkeland N.K."/>
            <person name="Nelson W.C."/>
            <person name="Dodson R.J."/>
            <person name="Grindhaug S.H."/>
            <person name="Holt I.E."/>
            <person name="Eidhammer I."/>
            <person name="Jonasen I."/>
            <person name="Vanaken S."/>
            <person name="Utterback T.R."/>
            <person name="Feldblyum T.V."/>
            <person name="Fraser C.M."/>
            <person name="Lillehaug J.R."/>
            <person name="Eisen J.A."/>
        </authorList>
    </citation>
    <scope>NUCLEOTIDE SEQUENCE [LARGE SCALE GENOMIC DNA]</scope>
    <source>
        <strain>ATCC 33009 / NCIMB 11132 / Bath</strain>
    </source>
</reference>
<keyword id="KW-0460">Magnesium</keyword>
<keyword id="KW-0479">Metal-binding</keyword>
<keyword id="KW-1185">Reference proteome</keyword>
<keyword id="KW-0784">Thiamine biosynthesis</keyword>
<keyword id="KW-0808">Transferase</keyword>
<proteinExistence type="inferred from homology"/>
<gene>
    <name evidence="1" type="primary">thiE</name>
    <name type="ordered locus">MCA2999</name>
</gene>